<reference key="1">
    <citation type="journal article" date="2003" name="Nature">
        <title>Genome sequence of Bacillus cereus and comparative analysis with Bacillus anthracis.</title>
        <authorList>
            <person name="Ivanova N."/>
            <person name="Sorokin A."/>
            <person name="Anderson I."/>
            <person name="Galleron N."/>
            <person name="Candelon B."/>
            <person name="Kapatral V."/>
            <person name="Bhattacharyya A."/>
            <person name="Reznik G."/>
            <person name="Mikhailova N."/>
            <person name="Lapidus A."/>
            <person name="Chu L."/>
            <person name="Mazur M."/>
            <person name="Goltsman E."/>
            <person name="Larsen N."/>
            <person name="D'Souza M."/>
            <person name="Walunas T."/>
            <person name="Grechkin Y."/>
            <person name="Pusch G."/>
            <person name="Haselkorn R."/>
            <person name="Fonstein M."/>
            <person name="Ehrlich S.D."/>
            <person name="Overbeek R."/>
            <person name="Kyrpides N.C."/>
        </authorList>
    </citation>
    <scope>NUCLEOTIDE SEQUENCE [LARGE SCALE GENOMIC DNA]</scope>
    <source>
        <strain>ATCC 14579 / DSM 31 / CCUG 7414 / JCM 2152 / NBRC 15305 / NCIMB 9373 / NCTC 2599 / NRRL B-3711</strain>
    </source>
</reference>
<reference key="2">
    <citation type="journal article" date="2014" name="Elife">
        <title>Prediction and characterization of enzymatic activities guided by sequence similarity and genome neighborhood networks.</title>
        <authorList>
            <person name="Zhao S."/>
            <person name="Sakai A."/>
            <person name="Zhang X."/>
            <person name="Vetting M.W."/>
            <person name="Kumar R."/>
            <person name="Hillerich B."/>
            <person name="San Francisco B."/>
            <person name="Solbiati J."/>
            <person name="Steves A."/>
            <person name="Brown S."/>
            <person name="Akiva E."/>
            <person name="Barber A."/>
            <person name="Seidel R.D."/>
            <person name="Babbitt P.C."/>
            <person name="Almo S.C."/>
            <person name="Gerlt J.A."/>
            <person name="Jacobson M.P."/>
        </authorList>
    </citation>
    <scope>FUNCTION</scope>
    <scope>CATALYTIC ACTIVITY</scope>
    <scope>BIOPHYSICOCHEMICAL PROPERTIES</scope>
    <source>
        <strain>ATCC 14579 / DSM 31 / CCUG 7414 / JCM 2152 / NBRC 15305 / NCIMB 9373 / NCTC 2599 / NRRL B-3711</strain>
    </source>
</reference>
<feature type="chain" id="PRO_0000432298" description="Delta(1)-pyrroline-2-carboxylate reductase">
    <location>
        <begin position="1"/>
        <end position="325"/>
    </location>
</feature>
<keyword id="KW-0520">NAD</keyword>
<keyword id="KW-0521">NADP</keyword>
<keyword id="KW-0560">Oxidoreductase</keyword>
<keyword id="KW-1185">Reference proteome</keyword>
<proteinExistence type="evidence at protein level"/>
<name>PY2CR_BACCR</name>
<evidence type="ECO:0000269" key="1">
    <source>
    </source>
</evidence>
<evidence type="ECO:0000303" key="2">
    <source>
    </source>
</evidence>
<evidence type="ECO:0000305" key="3"/>
<evidence type="ECO:0000312" key="4">
    <source>
        <dbReference type="EMBL" id="AAP07893.1"/>
    </source>
</evidence>
<dbReference type="EC" id="1.5.1.49" evidence="1"/>
<dbReference type="EMBL" id="AE016877">
    <property type="protein sequence ID" value="AAP07893.1"/>
    <property type="molecule type" value="Genomic_DNA"/>
</dbReference>
<dbReference type="RefSeq" id="NP_830692.1">
    <property type="nucleotide sequence ID" value="NC_004722.1"/>
</dbReference>
<dbReference type="RefSeq" id="WP_000960316.1">
    <property type="nucleotide sequence ID" value="NC_004722.1"/>
</dbReference>
<dbReference type="SMR" id="Q81HB0"/>
<dbReference type="STRING" id="226900.BC_0906"/>
<dbReference type="KEGG" id="bce:BC0906"/>
<dbReference type="PATRIC" id="fig|226900.8.peg.851"/>
<dbReference type="HOGENOM" id="CLU_042088_1_0_9"/>
<dbReference type="OrthoDB" id="9792005at2"/>
<dbReference type="SABIO-RK" id="Q81HB0"/>
<dbReference type="Proteomes" id="UP000001417">
    <property type="component" value="Chromosome"/>
</dbReference>
<dbReference type="GO" id="GO:0005737">
    <property type="term" value="C:cytoplasm"/>
    <property type="evidence" value="ECO:0000318"/>
    <property type="project" value="GO_Central"/>
</dbReference>
<dbReference type="GO" id="GO:0016491">
    <property type="term" value="F:oxidoreductase activity"/>
    <property type="evidence" value="ECO:0007669"/>
    <property type="project" value="UniProtKB-KW"/>
</dbReference>
<dbReference type="FunFam" id="3.30.1780.10:FF:000002">
    <property type="entry name" value="Ornithine cyclodeaminase"/>
    <property type="match status" value="1"/>
</dbReference>
<dbReference type="FunFam" id="3.40.50.720:FF:000311">
    <property type="entry name" value="Ornithine cyclodeaminase"/>
    <property type="match status" value="1"/>
</dbReference>
<dbReference type="Gene3D" id="3.40.50.720">
    <property type="entry name" value="NAD(P)-binding Rossmann-like Domain"/>
    <property type="match status" value="1"/>
</dbReference>
<dbReference type="Gene3D" id="3.30.1780.10">
    <property type="entry name" value="ornithine cyclodeaminase, domain 1"/>
    <property type="match status" value="1"/>
</dbReference>
<dbReference type="InterPro" id="IPR036291">
    <property type="entry name" value="NAD(P)-bd_dom_sf"/>
</dbReference>
<dbReference type="InterPro" id="IPR003462">
    <property type="entry name" value="ODC_Mu_crystall"/>
</dbReference>
<dbReference type="InterPro" id="IPR023401">
    <property type="entry name" value="ODC_N"/>
</dbReference>
<dbReference type="NCBIfam" id="NF006379">
    <property type="entry name" value="PRK08618.1"/>
    <property type="match status" value="1"/>
</dbReference>
<dbReference type="PANTHER" id="PTHR13812">
    <property type="entry name" value="KETIMINE REDUCTASE MU-CRYSTALLIN"/>
    <property type="match status" value="1"/>
</dbReference>
<dbReference type="PANTHER" id="PTHR13812:SF19">
    <property type="entry name" value="KETIMINE REDUCTASE MU-CRYSTALLIN"/>
    <property type="match status" value="1"/>
</dbReference>
<dbReference type="Pfam" id="PF02423">
    <property type="entry name" value="OCD_Mu_crystall"/>
    <property type="match status" value="1"/>
</dbReference>
<dbReference type="PIRSF" id="PIRSF001439">
    <property type="entry name" value="CryM"/>
    <property type="match status" value="1"/>
</dbReference>
<dbReference type="SUPFAM" id="SSF51735">
    <property type="entry name" value="NAD(P)-binding Rossmann-fold domains"/>
    <property type="match status" value="1"/>
</dbReference>
<sequence length="325" mass="35336">MLVISANEQRNLVNMNEVIEYAALALKEFSAERTITPIRGSLPFANEQNTALIMPSVAEGLEALGVKIVTVVPQNKQIGKKTINGIVMLSDFQAGEPLALLEGSYLTMIRTGALSGVATKYLARHNAKTLCIIGTGEQAKGIAEAIFAVRDIEKVILYNRTEEKAYAFAQYIQEKFGKPAYVYKDPNEAVREADIIVTTTNATTPVFSEILQKGVHVNAVGSFRPSMQELPSHAIAKANKVVVESKEAALDETGDLQVPIKEGLFKANAIHAELGQIISGEKAGRENDEEITIFKSVGLAVVDIIVAKYLYERALEQGVGNKIEF</sequence>
<protein>
    <recommendedName>
        <fullName>Delta(1)-pyrroline-2-carboxylate reductase</fullName>
        <shortName>Pyr2C reductase</shortName>
        <ecNumber evidence="1">1.5.1.49</ecNumber>
    </recommendedName>
    <alternativeName>
        <fullName evidence="2">Proline ketimine reductase</fullName>
    </alternativeName>
</protein>
<accession>Q81HB0</accession>
<organism>
    <name type="scientific">Bacillus cereus (strain ATCC 14579 / DSM 31 / CCUG 7414 / JCM 2152 / NBRC 15305 / NCIMB 9373 / NCTC 2599 / NRRL B-3711)</name>
    <dbReference type="NCBI Taxonomy" id="226900"/>
    <lineage>
        <taxon>Bacteria</taxon>
        <taxon>Bacillati</taxon>
        <taxon>Bacillota</taxon>
        <taxon>Bacilli</taxon>
        <taxon>Bacillales</taxon>
        <taxon>Bacillaceae</taxon>
        <taxon>Bacillus</taxon>
        <taxon>Bacillus cereus group</taxon>
    </lineage>
</organism>
<comment type="function">
    <text evidence="1">Catalyzes the reduction of Delta(1)-pyrroline-2-carboxylate (Pyr2C) to L-proline, using preferentially NADPH over NADH as the electron donor. Is likely involved in a degradation pathway that converts trans-3-hydroxy-L-proline (t3LHyp) to L-proline, which allows B.cereus to grow on t3LHyp as a sole carbon source.</text>
</comment>
<comment type="catalytic activity">
    <reaction evidence="1">
        <text>L-proline + NAD(+) = 1-pyrroline-2-carboxylate + NADH + H(+)</text>
        <dbReference type="Rhea" id="RHEA:20321"/>
        <dbReference type="ChEBI" id="CHEBI:15378"/>
        <dbReference type="ChEBI" id="CHEBI:39785"/>
        <dbReference type="ChEBI" id="CHEBI:57540"/>
        <dbReference type="ChEBI" id="CHEBI:57945"/>
        <dbReference type="ChEBI" id="CHEBI:60039"/>
        <dbReference type="EC" id="1.5.1.49"/>
    </reaction>
</comment>
<comment type="catalytic activity">
    <reaction evidence="1">
        <text>L-proline + NADP(+) = 1-pyrroline-2-carboxylate + NADPH + H(+)</text>
        <dbReference type="Rhea" id="RHEA:20317"/>
        <dbReference type="ChEBI" id="CHEBI:15378"/>
        <dbReference type="ChEBI" id="CHEBI:39785"/>
        <dbReference type="ChEBI" id="CHEBI:57783"/>
        <dbReference type="ChEBI" id="CHEBI:58349"/>
        <dbReference type="ChEBI" id="CHEBI:60039"/>
        <dbReference type="EC" id="1.5.1.49"/>
    </reaction>
</comment>
<comment type="biophysicochemical properties">
    <kinetics>
        <KM evidence="1">0.47 mM for Delta(1)-pyrroline-2-carboxylate (using NADPH as cosubstrate)</KM>
        <KM evidence="1">11 mM for Delta(1)-pyrroline-2-carboxylate (using NADH as cosubstrate)</KM>
        <text evidence="1">kcat is 15 sec(-1) for Pyr2C reduction using NADPH. kcat is 19 sec(-1) for Pyr2C reduction using NADH.</text>
    </kinetics>
</comment>
<comment type="similarity">
    <text evidence="3">Belongs to the ornithine cyclodeaminase/mu-crystallin family.</text>
</comment>
<gene>
    <name evidence="4" type="ordered locus">BC_0906</name>
</gene>